<keyword id="KW-0963">Cytoplasm</keyword>
<keyword id="KW-0378">Hydrolase</keyword>
<keyword id="KW-1185">Reference proteome</keyword>
<keyword id="KW-0694">RNA-binding</keyword>
<keyword id="KW-0820">tRNA-binding</keyword>
<dbReference type="EC" id="3.1.1.29" evidence="1"/>
<dbReference type="EMBL" id="CP000569">
    <property type="protein sequence ID" value="ABN73141.1"/>
    <property type="molecule type" value="Genomic_DNA"/>
</dbReference>
<dbReference type="RefSeq" id="WP_005595643.1">
    <property type="nucleotide sequence ID" value="NC_009053.1"/>
</dbReference>
<dbReference type="SMR" id="A3MYA5"/>
<dbReference type="STRING" id="416269.APL_0033"/>
<dbReference type="EnsemblBacteria" id="ABN73141">
    <property type="protein sequence ID" value="ABN73141"/>
    <property type="gene ID" value="APL_0033"/>
</dbReference>
<dbReference type="GeneID" id="48598174"/>
<dbReference type="KEGG" id="apl:APL_0033"/>
<dbReference type="eggNOG" id="COG0193">
    <property type="taxonomic scope" value="Bacteria"/>
</dbReference>
<dbReference type="HOGENOM" id="CLU_062456_3_1_6"/>
<dbReference type="Proteomes" id="UP000001432">
    <property type="component" value="Chromosome"/>
</dbReference>
<dbReference type="GO" id="GO:0005737">
    <property type="term" value="C:cytoplasm"/>
    <property type="evidence" value="ECO:0007669"/>
    <property type="project" value="UniProtKB-SubCell"/>
</dbReference>
<dbReference type="GO" id="GO:0004045">
    <property type="term" value="F:peptidyl-tRNA hydrolase activity"/>
    <property type="evidence" value="ECO:0007669"/>
    <property type="project" value="UniProtKB-UniRule"/>
</dbReference>
<dbReference type="GO" id="GO:0000049">
    <property type="term" value="F:tRNA binding"/>
    <property type="evidence" value="ECO:0007669"/>
    <property type="project" value="UniProtKB-UniRule"/>
</dbReference>
<dbReference type="GO" id="GO:0006515">
    <property type="term" value="P:protein quality control for misfolded or incompletely synthesized proteins"/>
    <property type="evidence" value="ECO:0007669"/>
    <property type="project" value="UniProtKB-UniRule"/>
</dbReference>
<dbReference type="GO" id="GO:0072344">
    <property type="term" value="P:rescue of stalled ribosome"/>
    <property type="evidence" value="ECO:0007669"/>
    <property type="project" value="UniProtKB-UniRule"/>
</dbReference>
<dbReference type="CDD" id="cd00462">
    <property type="entry name" value="PTH"/>
    <property type="match status" value="1"/>
</dbReference>
<dbReference type="FunFam" id="3.40.50.1470:FF:000001">
    <property type="entry name" value="Peptidyl-tRNA hydrolase"/>
    <property type="match status" value="1"/>
</dbReference>
<dbReference type="Gene3D" id="3.40.50.1470">
    <property type="entry name" value="Peptidyl-tRNA hydrolase"/>
    <property type="match status" value="1"/>
</dbReference>
<dbReference type="HAMAP" id="MF_00083">
    <property type="entry name" value="Pept_tRNA_hydro_bact"/>
    <property type="match status" value="1"/>
</dbReference>
<dbReference type="InterPro" id="IPR001328">
    <property type="entry name" value="Pept_tRNA_hydro"/>
</dbReference>
<dbReference type="InterPro" id="IPR018171">
    <property type="entry name" value="Pept_tRNA_hydro_CS"/>
</dbReference>
<dbReference type="InterPro" id="IPR036416">
    <property type="entry name" value="Pept_tRNA_hydro_sf"/>
</dbReference>
<dbReference type="NCBIfam" id="TIGR00447">
    <property type="entry name" value="pth"/>
    <property type="match status" value="1"/>
</dbReference>
<dbReference type="PANTHER" id="PTHR17224">
    <property type="entry name" value="PEPTIDYL-TRNA HYDROLASE"/>
    <property type="match status" value="1"/>
</dbReference>
<dbReference type="PANTHER" id="PTHR17224:SF1">
    <property type="entry name" value="PEPTIDYL-TRNA HYDROLASE"/>
    <property type="match status" value="1"/>
</dbReference>
<dbReference type="Pfam" id="PF01195">
    <property type="entry name" value="Pept_tRNA_hydro"/>
    <property type="match status" value="1"/>
</dbReference>
<dbReference type="SUPFAM" id="SSF53178">
    <property type="entry name" value="Peptidyl-tRNA hydrolase-like"/>
    <property type="match status" value="1"/>
</dbReference>
<dbReference type="PROSITE" id="PS01195">
    <property type="entry name" value="PEPT_TRNA_HYDROL_1"/>
    <property type="match status" value="1"/>
</dbReference>
<dbReference type="PROSITE" id="PS01196">
    <property type="entry name" value="PEPT_TRNA_HYDROL_2"/>
    <property type="match status" value="1"/>
</dbReference>
<accession>A3MYA5</accession>
<comment type="function">
    <text evidence="1">Hydrolyzes ribosome-free peptidyl-tRNAs (with 1 or more amino acids incorporated), which drop off the ribosome during protein synthesis, or as a result of ribosome stalling.</text>
</comment>
<comment type="function">
    <text evidence="1">Catalyzes the release of premature peptidyl moieties from peptidyl-tRNA molecules trapped in stalled 50S ribosomal subunits, and thus maintains levels of free tRNAs and 50S ribosomes.</text>
</comment>
<comment type="catalytic activity">
    <reaction evidence="1">
        <text>an N-acyl-L-alpha-aminoacyl-tRNA + H2O = an N-acyl-L-amino acid + a tRNA + H(+)</text>
        <dbReference type="Rhea" id="RHEA:54448"/>
        <dbReference type="Rhea" id="RHEA-COMP:10123"/>
        <dbReference type="Rhea" id="RHEA-COMP:13883"/>
        <dbReference type="ChEBI" id="CHEBI:15377"/>
        <dbReference type="ChEBI" id="CHEBI:15378"/>
        <dbReference type="ChEBI" id="CHEBI:59874"/>
        <dbReference type="ChEBI" id="CHEBI:78442"/>
        <dbReference type="ChEBI" id="CHEBI:138191"/>
        <dbReference type="EC" id="3.1.1.29"/>
    </reaction>
</comment>
<comment type="subunit">
    <text evidence="1">Monomer.</text>
</comment>
<comment type="subcellular location">
    <subcellularLocation>
        <location evidence="1">Cytoplasm</location>
    </subcellularLocation>
</comment>
<comment type="similarity">
    <text evidence="1">Belongs to the PTH family.</text>
</comment>
<name>PTH_ACTP2</name>
<feature type="chain" id="PRO_1000010556" description="Peptidyl-tRNA hydrolase">
    <location>
        <begin position="1"/>
        <end position="194"/>
    </location>
</feature>
<feature type="active site" description="Proton acceptor" evidence="1">
    <location>
        <position position="22"/>
    </location>
</feature>
<feature type="binding site" evidence="1">
    <location>
        <position position="17"/>
    </location>
    <ligand>
        <name>tRNA</name>
        <dbReference type="ChEBI" id="CHEBI:17843"/>
    </ligand>
</feature>
<feature type="binding site" evidence="1">
    <location>
        <position position="68"/>
    </location>
    <ligand>
        <name>tRNA</name>
        <dbReference type="ChEBI" id="CHEBI:17843"/>
    </ligand>
</feature>
<feature type="binding site" evidence="1">
    <location>
        <position position="70"/>
    </location>
    <ligand>
        <name>tRNA</name>
        <dbReference type="ChEBI" id="CHEBI:17843"/>
    </ligand>
</feature>
<feature type="binding site" evidence="1">
    <location>
        <position position="116"/>
    </location>
    <ligand>
        <name>tRNA</name>
        <dbReference type="ChEBI" id="CHEBI:17843"/>
    </ligand>
</feature>
<feature type="site" description="Discriminates between blocked and unblocked aminoacyl-tRNA" evidence="1">
    <location>
        <position position="12"/>
    </location>
</feature>
<feature type="site" description="Stabilizes the basic form of H active site to accept a proton" evidence="1">
    <location>
        <position position="95"/>
    </location>
</feature>
<organism>
    <name type="scientific">Actinobacillus pleuropneumoniae serotype 5b (strain L20)</name>
    <dbReference type="NCBI Taxonomy" id="416269"/>
    <lineage>
        <taxon>Bacteria</taxon>
        <taxon>Pseudomonadati</taxon>
        <taxon>Pseudomonadota</taxon>
        <taxon>Gammaproteobacteria</taxon>
        <taxon>Pasteurellales</taxon>
        <taxon>Pasteurellaceae</taxon>
        <taxon>Actinobacillus</taxon>
    </lineage>
</organism>
<sequence>MSQIKLIVGLANPGTKYEDTRHNAGEWLINEIARQFNVSLKEEAKFFGKVAKINAAGGEVRLLVPTTFMNLSGKAVGALANFYRIKPEEILVAHDELDLPPGVAKIKQGGGHGGHNGLKDIIASLGNSNNFYRVRIGIGHPGSKELVAGYVLGKPSPQDQEKINAAVDEAGRCVDLLLKDGITKATNRLNAFKA</sequence>
<gene>
    <name evidence="1" type="primary">pth</name>
    <name type="ordered locus">APL_0033</name>
</gene>
<reference key="1">
    <citation type="journal article" date="2008" name="J. Bacteriol.">
        <title>The complete genome sequence of Actinobacillus pleuropneumoniae L20 (serotype 5b).</title>
        <authorList>
            <person name="Foote S.J."/>
            <person name="Bosse J.T."/>
            <person name="Bouevitch A.B."/>
            <person name="Langford P.R."/>
            <person name="Young N.M."/>
            <person name="Nash J.H.E."/>
        </authorList>
    </citation>
    <scope>NUCLEOTIDE SEQUENCE [LARGE SCALE GENOMIC DNA]</scope>
    <source>
        <strain>L20</strain>
    </source>
</reference>
<proteinExistence type="inferred from homology"/>
<evidence type="ECO:0000255" key="1">
    <source>
        <dbReference type="HAMAP-Rule" id="MF_00083"/>
    </source>
</evidence>
<protein>
    <recommendedName>
        <fullName evidence="1">Peptidyl-tRNA hydrolase</fullName>
        <shortName evidence="1">Pth</shortName>
        <ecNumber evidence="1">3.1.1.29</ecNumber>
    </recommendedName>
</protein>